<proteinExistence type="inferred from homology"/>
<gene>
    <name type="primary">mip</name>
</gene>
<name>MIP_LEGLO</name>
<comment type="function">
    <text>Essential virulence factor associated with macrophage infectivity. Exhibits PPIase activity.</text>
</comment>
<comment type="catalytic activity">
    <reaction>
        <text>[protein]-peptidylproline (omega=180) = [protein]-peptidylproline (omega=0)</text>
        <dbReference type="Rhea" id="RHEA:16237"/>
        <dbReference type="Rhea" id="RHEA-COMP:10747"/>
        <dbReference type="Rhea" id="RHEA-COMP:10748"/>
        <dbReference type="ChEBI" id="CHEBI:83833"/>
        <dbReference type="ChEBI" id="CHEBI:83834"/>
        <dbReference type="EC" id="5.2.1.8"/>
    </reaction>
</comment>
<comment type="activity regulation">
    <text>Strongly inhibited by FK506 but is completely resistant to cyclosporin A.</text>
</comment>
<comment type="subcellular location">
    <subcellularLocation>
        <location>Cell outer membrane</location>
    </subcellularLocation>
</comment>
<comment type="similarity">
    <text evidence="3">Belongs to the FKBP-type PPIase family.</text>
</comment>
<evidence type="ECO:0000250" key="1"/>
<evidence type="ECO:0000255" key="2">
    <source>
        <dbReference type="PROSITE-ProRule" id="PRU00277"/>
    </source>
</evidence>
<evidence type="ECO:0000305" key="3"/>
<keyword id="KW-0998">Cell outer membrane</keyword>
<keyword id="KW-0413">Isomerase</keyword>
<keyword id="KW-0472">Membrane</keyword>
<keyword id="KW-0697">Rotamase</keyword>
<keyword id="KW-0732">Signal</keyword>
<keyword id="KW-0843">Virulence</keyword>
<dbReference type="EC" id="5.2.1.8"/>
<dbReference type="EMBL" id="X83036">
    <property type="protein sequence ID" value="CAA58145.1"/>
    <property type="molecule type" value="Genomic_DNA"/>
</dbReference>
<dbReference type="EMBL" id="AF000958">
    <property type="protein sequence ID" value="AAC46211.1"/>
    <property type="molecule type" value="Genomic_DNA"/>
</dbReference>
<dbReference type="PIR" id="S57924">
    <property type="entry name" value="S57924"/>
</dbReference>
<dbReference type="RefSeq" id="WP_003636663.1">
    <property type="nucleotide sequence ID" value="NZ_RXNW01000015.1"/>
</dbReference>
<dbReference type="SMR" id="P53605"/>
<dbReference type="OMA" id="DQFIAAN"/>
<dbReference type="GO" id="GO:0009279">
    <property type="term" value="C:cell outer membrane"/>
    <property type="evidence" value="ECO:0007669"/>
    <property type="project" value="UniProtKB-SubCell"/>
</dbReference>
<dbReference type="GO" id="GO:0003755">
    <property type="term" value="F:peptidyl-prolyl cis-trans isomerase activity"/>
    <property type="evidence" value="ECO:0007669"/>
    <property type="project" value="UniProtKB-KW"/>
</dbReference>
<dbReference type="GO" id="GO:0006457">
    <property type="term" value="P:protein folding"/>
    <property type="evidence" value="ECO:0007669"/>
    <property type="project" value="InterPro"/>
</dbReference>
<dbReference type="Gene3D" id="3.10.50.40">
    <property type="match status" value="1"/>
</dbReference>
<dbReference type="Gene3D" id="1.10.287.460">
    <property type="entry name" value="Peptidyl-prolyl cis-trans isomerase, FKBP-type, N-terminal domain"/>
    <property type="match status" value="1"/>
</dbReference>
<dbReference type="InterPro" id="IPR008104">
    <property type="entry name" value="INFPOTNTIATR"/>
</dbReference>
<dbReference type="InterPro" id="IPR046357">
    <property type="entry name" value="PPIase_dom_sf"/>
</dbReference>
<dbReference type="InterPro" id="IPR001179">
    <property type="entry name" value="PPIase_FKBP_dom"/>
</dbReference>
<dbReference type="InterPro" id="IPR000774">
    <property type="entry name" value="PPIase_FKBP_N"/>
</dbReference>
<dbReference type="InterPro" id="IPR036944">
    <property type="entry name" value="PPIase_FKBP_N_sf"/>
</dbReference>
<dbReference type="PANTHER" id="PTHR43811:SF19">
    <property type="entry name" value="39 KDA FK506-BINDING NUCLEAR PROTEIN"/>
    <property type="match status" value="1"/>
</dbReference>
<dbReference type="PANTHER" id="PTHR43811">
    <property type="entry name" value="FKBP-TYPE PEPTIDYL-PROLYL CIS-TRANS ISOMERASE FKPA"/>
    <property type="match status" value="1"/>
</dbReference>
<dbReference type="Pfam" id="PF00254">
    <property type="entry name" value="FKBP_C"/>
    <property type="match status" value="1"/>
</dbReference>
<dbReference type="Pfam" id="PF01346">
    <property type="entry name" value="FKBP_N"/>
    <property type="match status" value="1"/>
</dbReference>
<dbReference type="PRINTS" id="PR01730">
    <property type="entry name" value="INFPOTNTIATR"/>
</dbReference>
<dbReference type="SUPFAM" id="SSF54534">
    <property type="entry name" value="FKBP-like"/>
    <property type="match status" value="1"/>
</dbReference>
<dbReference type="PROSITE" id="PS50059">
    <property type="entry name" value="FKBP_PPIASE"/>
    <property type="match status" value="1"/>
</dbReference>
<sequence>MKMKLVTAAIMGLAMSTAMAATDATSLTTDKDKLSYSIGADLGKNFKNQGIDINPDVLAKGMQDGMSGAQLILTEEQMKDVLSKFQKDLMAKRSAEFNKKAEENKAKGDAFLSANKSKPGIVVLPSGLQYKIIDAGTGAKPGKSDTVTVEYTGTLIDGTVFDSTEKAGKPATFQVSQVIPGWTEALQLMPAGSTWEVFVPADLAYGPRSVGGPIGPNETLIFKIHLISVKKAA</sequence>
<reference key="1">
    <citation type="submission" date="1995-07" db="EMBL/GenBank/DDBJ databases">
        <authorList>
            <person name="Doyle R.M."/>
            <person name="Manning P.A."/>
            <person name="Heuzenroeder M.W."/>
        </authorList>
    </citation>
    <scope>NUCLEOTIDE SEQUENCE [GENOMIC DNA]</scope>
    <source>
        <strain>ATCC 33462 / DSM 10572 / NCTC 11477 / Long Beach 4 / Serogroup 1</strain>
    </source>
</reference>
<reference key="2">
    <citation type="submission" date="1997-06" db="EMBL/GenBank/DDBJ databases">
        <authorList>
            <person name="Doyle R.M."/>
            <person name="McLennan A.M."/>
            <person name="Manning P.A."/>
            <person name="Heuzenroeder M.W."/>
        </authorList>
    </citation>
    <scope>NUCLEOTIDE SEQUENCE [GENOMIC DNA]</scope>
    <source>
        <strain>ATCC 33484 / DSM 25315 / NCTC 11530 / Tucker 1 / Serogroup 2</strain>
    </source>
</reference>
<protein>
    <recommendedName>
        <fullName>Outer membrane protein MIP</fullName>
        <ecNumber>5.2.1.8</ecNumber>
    </recommendedName>
    <alternativeName>
        <fullName>Macrophage infectivity potentiator</fullName>
    </alternativeName>
    <alternativeName>
        <fullName>Peptidyl-prolyl cis-trans isomerase</fullName>
        <shortName>PPIase</shortName>
    </alternativeName>
    <alternativeName>
        <fullName>Rotamase</fullName>
    </alternativeName>
</protein>
<feature type="signal peptide" evidence="1">
    <location>
        <begin position="1"/>
        <end position="20"/>
    </location>
</feature>
<feature type="chain" id="PRO_0000025531" description="Outer membrane protein MIP">
    <location>
        <begin position="21"/>
        <end position="233"/>
    </location>
</feature>
<feature type="domain" description="PPIase FKBP-type" evidence="2">
    <location>
        <begin position="144"/>
        <end position="233"/>
    </location>
</feature>
<accession>P53605</accession>
<organism>
    <name type="scientific">Legionella longbeachae</name>
    <dbReference type="NCBI Taxonomy" id="450"/>
    <lineage>
        <taxon>Bacteria</taxon>
        <taxon>Pseudomonadati</taxon>
        <taxon>Pseudomonadota</taxon>
        <taxon>Gammaproteobacteria</taxon>
        <taxon>Legionellales</taxon>
        <taxon>Legionellaceae</taxon>
        <taxon>Legionella</taxon>
    </lineage>
</organism>